<evidence type="ECO:0000255" key="1">
    <source>
        <dbReference type="HAMAP-Rule" id="MF_01579"/>
    </source>
</evidence>
<comment type="function">
    <text evidence="1">Specifically methylates the cytosine at position 1407 (m5C1407) of 16S rRNA.</text>
</comment>
<comment type="catalytic activity">
    <reaction evidence="1">
        <text>cytidine(1407) in 16S rRNA + S-adenosyl-L-methionine = 5-methylcytidine(1407) in 16S rRNA + S-adenosyl-L-homocysteine + H(+)</text>
        <dbReference type="Rhea" id="RHEA:42756"/>
        <dbReference type="Rhea" id="RHEA-COMP:10223"/>
        <dbReference type="Rhea" id="RHEA-COMP:10224"/>
        <dbReference type="ChEBI" id="CHEBI:15378"/>
        <dbReference type="ChEBI" id="CHEBI:57856"/>
        <dbReference type="ChEBI" id="CHEBI:59789"/>
        <dbReference type="ChEBI" id="CHEBI:74483"/>
        <dbReference type="ChEBI" id="CHEBI:82748"/>
        <dbReference type="EC" id="2.1.1.178"/>
    </reaction>
</comment>
<comment type="subcellular location">
    <subcellularLocation>
        <location evidence="1">Cytoplasm</location>
    </subcellularLocation>
</comment>
<comment type="similarity">
    <text evidence="1">Belongs to the class I-like SAM-binding methyltransferase superfamily. RsmB/NOP family.</text>
</comment>
<feature type="chain" id="PRO_1000147576" description="Ribosomal RNA small subunit methyltransferase F">
    <location>
        <begin position="1"/>
        <end position="479"/>
    </location>
</feature>
<feature type="active site" description="Nucleophile" evidence="1">
    <location>
        <position position="247"/>
    </location>
</feature>
<feature type="binding site" evidence="1">
    <location>
        <begin position="125"/>
        <end position="131"/>
    </location>
    <ligand>
        <name>S-adenosyl-L-methionine</name>
        <dbReference type="ChEBI" id="CHEBI:59789"/>
    </ligand>
</feature>
<feature type="binding site" evidence="1">
    <location>
        <position position="149"/>
    </location>
    <ligand>
        <name>S-adenosyl-L-methionine</name>
        <dbReference type="ChEBI" id="CHEBI:59789"/>
    </ligand>
</feature>
<feature type="binding site" evidence="1">
    <location>
        <position position="176"/>
    </location>
    <ligand>
        <name>S-adenosyl-L-methionine</name>
        <dbReference type="ChEBI" id="CHEBI:59789"/>
    </ligand>
</feature>
<feature type="binding site" evidence="1">
    <location>
        <position position="194"/>
    </location>
    <ligand>
        <name>S-adenosyl-L-methionine</name>
        <dbReference type="ChEBI" id="CHEBI:59789"/>
    </ligand>
</feature>
<reference key="1">
    <citation type="journal article" date="2009" name="BMC Genomics">
        <title>Pseudogene accumulation in the evolutionary histories of Salmonella enterica serovars Paratyphi A and Typhi.</title>
        <authorList>
            <person name="Holt K.E."/>
            <person name="Thomson N.R."/>
            <person name="Wain J."/>
            <person name="Langridge G.C."/>
            <person name="Hasan R."/>
            <person name="Bhutta Z.A."/>
            <person name="Quail M.A."/>
            <person name="Norbertczak H."/>
            <person name="Walker D."/>
            <person name="Simmonds M."/>
            <person name="White B."/>
            <person name="Bason N."/>
            <person name="Mungall K."/>
            <person name="Dougan G."/>
            <person name="Parkhill J."/>
        </authorList>
    </citation>
    <scope>NUCLEOTIDE SEQUENCE [LARGE SCALE GENOMIC DNA]</scope>
    <source>
        <strain>AKU_12601</strain>
    </source>
</reference>
<gene>
    <name evidence="1" type="primary">rsmF</name>
    <name type="ordered locus">SSPA0954</name>
</gene>
<organism>
    <name type="scientific">Salmonella paratyphi A (strain AKU_12601)</name>
    <dbReference type="NCBI Taxonomy" id="554290"/>
    <lineage>
        <taxon>Bacteria</taxon>
        <taxon>Pseudomonadati</taxon>
        <taxon>Pseudomonadota</taxon>
        <taxon>Gammaproteobacteria</taxon>
        <taxon>Enterobacterales</taxon>
        <taxon>Enterobacteriaceae</taxon>
        <taxon>Salmonella</taxon>
    </lineage>
</organism>
<keyword id="KW-0963">Cytoplasm</keyword>
<keyword id="KW-0489">Methyltransferase</keyword>
<keyword id="KW-0694">RNA-binding</keyword>
<keyword id="KW-0698">rRNA processing</keyword>
<keyword id="KW-0949">S-adenosyl-L-methionine</keyword>
<keyword id="KW-0808">Transferase</keyword>
<accession>B5BHA6</accession>
<sequence length="479" mass="53284">MAQHAVYFPDAFLTQMREAMPSTLSFDEFISACQRPLRRSIRINTLKISVADFLALIAPYGWSLTPIPWCHEGFWIERDDEEALPLGSTAEHLSGLFYIQEASSMLPVAALFADDNHPQRVMDMAAAPGSKTTQIAARMGNRGAILANEFSASRVKVLHANISRCGIANTALTHFDGRVFGAALPEMFDAILLDAPCSGEGVVRKDPDALKNWSPESNLDIAATQRELLDSAFHALRPGGTLVYSTCTLNRQENEDVCLWLKETYADAVEFLPLGDLFPDADRALTPEGFLHVFPQIYDCEGFFVARLRKMSSLPAMPAPGYKVGAFPFTPLKGREALNVTQAANAVGLLWDENLHLWQREKEVWLFPAEIESLIGKVRFSRLGIKLAESHNKGYRWQHEATIALACPTHAHAFELSAQEAEEWYRGRDIYPQTPPAADDVLVTFQHQPLGLAKRIGARIKNSYPRELVRDGKLFTGNS</sequence>
<protein>
    <recommendedName>
        <fullName evidence="1">Ribosomal RNA small subunit methyltransferase F</fullName>
        <ecNumber evidence="1">2.1.1.178</ecNumber>
    </recommendedName>
    <alternativeName>
        <fullName evidence="1">16S rRNA m5C1407 methyltransferase</fullName>
    </alternativeName>
    <alternativeName>
        <fullName evidence="1">rRNA (cytosine-C(5)-)-methyltransferase RsmF</fullName>
    </alternativeName>
</protein>
<dbReference type="EC" id="2.1.1.178" evidence="1"/>
<dbReference type="EMBL" id="FM200053">
    <property type="protein sequence ID" value="CAR59104.1"/>
    <property type="molecule type" value="Genomic_DNA"/>
</dbReference>
<dbReference type="RefSeq" id="WP_011233026.1">
    <property type="nucleotide sequence ID" value="NC_011147.1"/>
</dbReference>
<dbReference type="SMR" id="B5BHA6"/>
<dbReference type="KEGG" id="sek:SSPA0954"/>
<dbReference type="HOGENOM" id="CLU_005316_6_2_6"/>
<dbReference type="Proteomes" id="UP000001869">
    <property type="component" value="Chromosome"/>
</dbReference>
<dbReference type="GO" id="GO:0005737">
    <property type="term" value="C:cytoplasm"/>
    <property type="evidence" value="ECO:0007669"/>
    <property type="project" value="UniProtKB-SubCell"/>
</dbReference>
<dbReference type="GO" id="GO:0003723">
    <property type="term" value="F:RNA binding"/>
    <property type="evidence" value="ECO:0007669"/>
    <property type="project" value="UniProtKB-KW"/>
</dbReference>
<dbReference type="GO" id="GO:0009383">
    <property type="term" value="F:rRNA (cytosine-C5-)-methyltransferase activity"/>
    <property type="evidence" value="ECO:0007669"/>
    <property type="project" value="TreeGrafter"/>
</dbReference>
<dbReference type="GO" id="GO:0070475">
    <property type="term" value="P:rRNA base methylation"/>
    <property type="evidence" value="ECO:0007669"/>
    <property type="project" value="TreeGrafter"/>
</dbReference>
<dbReference type="CDD" id="cd02440">
    <property type="entry name" value="AdoMet_MTases"/>
    <property type="match status" value="1"/>
</dbReference>
<dbReference type="FunFam" id="3.10.450.720:FF:000001">
    <property type="entry name" value="Ribosomal RNA small subunit methyltransferase F"/>
    <property type="match status" value="1"/>
</dbReference>
<dbReference type="FunFam" id="3.40.50.150:FF:000079">
    <property type="entry name" value="Ribosomal RNA small subunit methyltransferase F"/>
    <property type="match status" value="1"/>
</dbReference>
<dbReference type="Gene3D" id="3.10.450.720">
    <property type="match status" value="1"/>
</dbReference>
<dbReference type="Gene3D" id="3.40.50.150">
    <property type="entry name" value="Vaccinia Virus protein VP39"/>
    <property type="match status" value="1"/>
</dbReference>
<dbReference type="HAMAP" id="MF_01579">
    <property type="entry name" value="16SrRNA_methyltr_F"/>
    <property type="match status" value="1"/>
</dbReference>
<dbReference type="InterPro" id="IPR031341">
    <property type="entry name" value="Methyltr_RsmF_N"/>
</dbReference>
<dbReference type="InterPro" id="IPR049560">
    <property type="entry name" value="MeTrfase_RsmB-F_NOP2_cat"/>
</dbReference>
<dbReference type="InterPro" id="IPR001678">
    <property type="entry name" value="MeTrfase_RsmB-F_NOP2_dom"/>
</dbReference>
<dbReference type="InterPro" id="IPR027391">
    <property type="entry name" value="Nol1_Nop2_Fmu_2"/>
</dbReference>
<dbReference type="InterPro" id="IPR011023">
    <property type="entry name" value="Nop2p"/>
</dbReference>
<dbReference type="InterPro" id="IPR023267">
    <property type="entry name" value="RCMT"/>
</dbReference>
<dbReference type="InterPro" id="IPR023545">
    <property type="entry name" value="rRNA_ssu_MeTfrase_F"/>
</dbReference>
<dbReference type="InterPro" id="IPR018314">
    <property type="entry name" value="RsmB/NOL1/NOP2-like_CS"/>
</dbReference>
<dbReference type="InterPro" id="IPR029063">
    <property type="entry name" value="SAM-dependent_MTases_sf"/>
</dbReference>
<dbReference type="InterPro" id="IPR048457">
    <property type="entry name" value="YebU_pre-PUA_dom"/>
</dbReference>
<dbReference type="NCBIfam" id="TIGR00446">
    <property type="entry name" value="nop2p"/>
    <property type="match status" value="1"/>
</dbReference>
<dbReference type="NCBIfam" id="NF008898">
    <property type="entry name" value="PRK11933.1"/>
    <property type="match status" value="1"/>
</dbReference>
<dbReference type="PANTHER" id="PTHR22807:SF30">
    <property type="entry name" value="28S RRNA (CYTOSINE(4447)-C(5))-METHYLTRANSFERASE-RELATED"/>
    <property type="match status" value="1"/>
</dbReference>
<dbReference type="PANTHER" id="PTHR22807">
    <property type="entry name" value="NOP2 YEAST -RELATED NOL1/NOP2/FMU SUN DOMAIN-CONTAINING"/>
    <property type="match status" value="1"/>
</dbReference>
<dbReference type="Pfam" id="PF01189">
    <property type="entry name" value="Methyltr_RsmB-F"/>
    <property type="match status" value="1"/>
</dbReference>
<dbReference type="Pfam" id="PF17125">
    <property type="entry name" value="Methyltr_RsmF_N"/>
    <property type="match status" value="1"/>
</dbReference>
<dbReference type="Pfam" id="PF13636">
    <property type="entry name" value="Methyltranf_PUA"/>
    <property type="match status" value="1"/>
</dbReference>
<dbReference type="Pfam" id="PF21150">
    <property type="entry name" value="YebU_pre-PUA_dom"/>
    <property type="match status" value="1"/>
</dbReference>
<dbReference type="PRINTS" id="PR02008">
    <property type="entry name" value="RCMTFAMILY"/>
</dbReference>
<dbReference type="SUPFAM" id="SSF53335">
    <property type="entry name" value="S-adenosyl-L-methionine-dependent methyltransferases"/>
    <property type="match status" value="1"/>
</dbReference>
<dbReference type="PROSITE" id="PS01153">
    <property type="entry name" value="NOL1_NOP2_SUN"/>
    <property type="match status" value="1"/>
</dbReference>
<dbReference type="PROSITE" id="PS51686">
    <property type="entry name" value="SAM_MT_RSMB_NOP"/>
    <property type="match status" value="1"/>
</dbReference>
<name>RSMF_SALPK</name>
<proteinExistence type="inferred from homology"/>